<protein>
    <recommendedName>
        <fullName>Forkhead box protein N3</fullName>
    </recommendedName>
</protein>
<evidence type="ECO:0000250" key="1">
    <source>
        <dbReference type="UniProtKB" id="O00409"/>
    </source>
</evidence>
<evidence type="ECO:0000255" key="2">
    <source>
        <dbReference type="PROSITE-ProRule" id="PRU00089"/>
    </source>
</evidence>
<evidence type="ECO:0000256" key="3">
    <source>
        <dbReference type="SAM" id="MobiDB-lite"/>
    </source>
</evidence>
<evidence type="ECO:0000269" key="4">
    <source>
    </source>
</evidence>
<evidence type="ECO:0000303" key="5">
    <source>
    </source>
</evidence>
<evidence type="ECO:0000305" key="6"/>
<evidence type="ECO:0000312" key="7">
    <source>
        <dbReference type="EMBL" id="CAJ38819.1"/>
    </source>
</evidence>
<sequence length="485" mass="53892">MGPVMPPSKKPEGTGISVSSQCYRSSTLSNPLQDDDDLDFPPPPVKIHKEKGGMEDEELTNLNWLHENKNLLKSFGDTVLRSVSPVQDIDDDTPPSPAQSDMPYDAKQNPNCKPPYSFSCLIFMAVEDSPTKRLPVKDIYNWILEHFPYFANAPTGWKNSVRHNLSLNKCFKKVDKDRSQSIGKGSLWCIDPEYRQNLIQALKKTPYHPYSHVFNTPPTSPQAYQSTSVPPLWPGSTFFKKNGALLQDPDIDAASAMMLLNSAHELQAGFSPGVIQNGARVLNRGIFPGVRPLPINPIGAMAASVRNGIANCRTRMESEPSCGSPLVSSDPKDDHNYSSAKSANKRSSSPSDSISSSADDHYEFAAKVCREGSDISFQSHESFSETEEEDKKQIKKELKEPLVESGYSSQHKKKQHLLKLRRIPSDALPLKKRRTEKPPESDDEEMKEAAGSLLHLAGIRSCLNNITNRTAKGQKEQKDKETTKN</sequence>
<comment type="function">
    <text evidence="1">Acts as a transcriptional repressor. May be involved in DNA damage-inducible cell cycle arrests (checkpoints) (By similarity).</text>
</comment>
<comment type="subcellular location">
    <subcellularLocation>
        <location evidence="6">Nucleus</location>
    </subcellularLocation>
</comment>
<comment type="alternative products">
    <event type="alternative splicing"/>
    <isoform>
        <id>Q3BJS3-1</id>
        <name evidence="4">a</name>
        <sequence type="displayed"/>
    </isoform>
    <isoform>
        <id>Q3BJS3-2</id>
        <name evidence="4">b</name>
        <sequence type="described" ref="VSP_052096"/>
    </isoform>
</comment>
<comment type="tissue specificity">
    <text evidence="4">At early cleavage stages, localized within the animal half of the embryo. At gastrulation, expression expands over the whole embryo excluding the future endodermal cells of the blastopore. During neurulation, expressed in the prospective eye field and in the neural crest cells. Strongly enriched in the eye vesicles at stage 26. From stage 29 onwards, expressed predominantly in the eye, the branchial arches and the vagal ganglion. At stage 38, expressed throughout the head with strongest expression in the head mesenchyme and the eye lens.</text>
</comment>
<comment type="developmental stage">
    <text evidence="4">Both isoform 1 and isoform 2 are expressed both maternally and zygotically. Present in all embryonic stages including early cleavage stages, with levels decreasing during gastrulation. Expression is then up-regulated at stage 25 and persists until stage 45.</text>
</comment>
<dbReference type="EMBL" id="AM114794">
    <property type="protein sequence ID" value="CAJ38819.1"/>
    <property type="molecule type" value="mRNA"/>
</dbReference>
<dbReference type="EMBL" id="AM114795">
    <property type="protein sequence ID" value="CAJ38820.1"/>
    <property type="molecule type" value="mRNA"/>
</dbReference>
<dbReference type="RefSeq" id="NP_001090178.1">
    <molecule id="Q3BJS3-1"/>
    <property type="nucleotide sequence ID" value="NM_001096709.1"/>
</dbReference>
<dbReference type="SMR" id="Q3BJS3"/>
<dbReference type="GeneID" id="779041"/>
<dbReference type="KEGG" id="xla:779041"/>
<dbReference type="AGR" id="Xenbase:XB-GENE-864945"/>
<dbReference type="CTD" id="779041"/>
<dbReference type="Xenbase" id="XB-GENE-864945">
    <property type="gene designation" value="foxn3.S"/>
</dbReference>
<dbReference type="OrthoDB" id="5954824at2759"/>
<dbReference type="Proteomes" id="UP000186698">
    <property type="component" value="Chromosome 8S"/>
</dbReference>
<dbReference type="Bgee" id="779041">
    <property type="expression patterns" value="Expressed in spleen and 19 other cell types or tissues"/>
</dbReference>
<dbReference type="GO" id="GO:0005634">
    <property type="term" value="C:nucleus"/>
    <property type="evidence" value="ECO:0000318"/>
    <property type="project" value="GO_Central"/>
</dbReference>
<dbReference type="GO" id="GO:0000987">
    <property type="term" value="F:cis-regulatory region sequence-specific DNA binding"/>
    <property type="evidence" value="ECO:0000318"/>
    <property type="project" value="GO_Central"/>
</dbReference>
<dbReference type="GO" id="GO:0003700">
    <property type="term" value="F:DNA-binding transcription factor activity"/>
    <property type="evidence" value="ECO:0000318"/>
    <property type="project" value="GO_Central"/>
</dbReference>
<dbReference type="GO" id="GO:0045892">
    <property type="term" value="P:negative regulation of DNA-templated transcription"/>
    <property type="evidence" value="ECO:0000250"/>
    <property type="project" value="UniProtKB"/>
</dbReference>
<dbReference type="GO" id="GO:0006355">
    <property type="term" value="P:regulation of DNA-templated transcription"/>
    <property type="evidence" value="ECO:0000318"/>
    <property type="project" value="GO_Central"/>
</dbReference>
<dbReference type="CDD" id="cd20059">
    <property type="entry name" value="FH_FOXN3"/>
    <property type="match status" value="1"/>
</dbReference>
<dbReference type="FunFam" id="1.10.10.10:FF:000167">
    <property type="entry name" value="forkhead box protein N3 isoform X1"/>
    <property type="match status" value="1"/>
</dbReference>
<dbReference type="Gene3D" id="1.10.10.10">
    <property type="entry name" value="Winged helix-like DNA-binding domain superfamily/Winged helix DNA-binding domain"/>
    <property type="match status" value="1"/>
</dbReference>
<dbReference type="InterPro" id="IPR047404">
    <property type="entry name" value="FH_FOXN3"/>
</dbReference>
<dbReference type="InterPro" id="IPR001766">
    <property type="entry name" value="Fork_head_dom"/>
</dbReference>
<dbReference type="InterPro" id="IPR047119">
    <property type="entry name" value="FOXN2/3-like"/>
</dbReference>
<dbReference type="InterPro" id="IPR030456">
    <property type="entry name" value="TF_fork_head_CS_2"/>
</dbReference>
<dbReference type="InterPro" id="IPR036388">
    <property type="entry name" value="WH-like_DNA-bd_sf"/>
</dbReference>
<dbReference type="InterPro" id="IPR036390">
    <property type="entry name" value="WH_DNA-bd_sf"/>
</dbReference>
<dbReference type="PANTHER" id="PTHR13962:SF20">
    <property type="entry name" value="FORKHEAD BOX PROTEIN N3"/>
    <property type="match status" value="1"/>
</dbReference>
<dbReference type="PANTHER" id="PTHR13962">
    <property type="entry name" value="FORKHEAD BOX PROTEIN N3-LIKE PROTEIN-RELATED"/>
    <property type="match status" value="1"/>
</dbReference>
<dbReference type="Pfam" id="PF00250">
    <property type="entry name" value="Forkhead"/>
    <property type="match status" value="1"/>
</dbReference>
<dbReference type="PRINTS" id="PR00053">
    <property type="entry name" value="FORKHEAD"/>
</dbReference>
<dbReference type="SMART" id="SM00339">
    <property type="entry name" value="FH"/>
    <property type="match status" value="1"/>
</dbReference>
<dbReference type="SUPFAM" id="SSF46785">
    <property type="entry name" value="Winged helix' DNA-binding domain"/>
    <property type="match status" value="1"/>
</dbReference>
<dbReference type="PROSITE" id="PS00658">
    <property type="entry name" value="FORK_HEAD_2"/>
    <property type="match status" value="1"/>
</dbReference>
<dbReference type="PROSITE" id="PS50039">
    <property type="entry name" value="FORK_HEAD_3"/>
    <property type="match status" value="1"/>
</dbReference>
<accession>Q3BJS3</accession>
<accession>Q3BJS2</accession>
<organism>
    <name type="scientific">Xenopus laevis</name>
    <name type="common">African clawed frog</name>
    <dbReference type="NCBI Taxonomy" id="8355"/>
    <lineage>
        <taxon>Eukaryota</taxon>
        <taxon>Metazoa</taxon>
        <taxon>Chordata</taxon>
        <taxon>Craniata</taxon>
        <taxon>Vertebrata</taxon>
        <taxon>Euteleostomi</taxon>
        <taxon>Amphibia</taxon>
        <taxon>Batrachia</taxon>
        <taxon>Anura</taxon>
        <taxon>Pipoidea</taxon>
        <taxon>Pipidae</taxon>
        <taxon>Xenopodinae</taxon>
        <taxon>Xenopus</taxon>
        <taxon>Xenopus</taxon>
    </lineage>
</organism>
<proteinExistence type="evidence at transcript level"/>
<gene>
    <name evidence="7" type="primary">foxn3</name>
</gene>
<keyword id="KW-0025">Alternative splicing</keyword>
<keyword id="KW-0131">Cell cycle</keyword>
<keyword id="KW-0238">DNA-binding</keyword>
<keyword id="KW-0539">Nucleus</keyword>
<keyword id="KW-1185">Reference proteome</keyword>
<keyword id="KW-0678">Repressor</keyword>
<keyword id="KW-0804">Transcription</keyword>
<keyword id="KW-0805">Transcription regulation</keyword>
<reference evidence="6 7" key="1">
    <citation type="journal article" date="2006" name="Int. J. Dev. Biol.">
        <title>Temporal and spatial expression patterns of FoxN genes in Xenopus laevis embryos.</title>
        <authorList>
            <person name="Schuff M."/>
            <person name="Roessner A."/>
            <person name="Donow C."/>
            <person name="Knoechel W."/>
        </authorList>
    </citation>
    <scope>NUCLEOTIDE SEQUENCE [MRNA] (ISOFORMS A AND B)</scope>
    <scope>TISSUE SPECIFICITY</scope>
    <scope>DEVELOPMENTAL STAGE</scope>
</reference>
<feature type="chain" id="PRO_0000247734" description="Forkhead box protein N3">
    <location>
        <begin position="1"/>
        <end position="485"/>
    </location>
</feature>
<feature type="DNA-binding region" description="Fork-head" evidence="2">
    <location>
        <begin position="113"/>
        <end position="209"/>
    </location>
</feature>
<feature type="region of interest" description="Disordered" evidence="3">
    <location>
        <begin position="1"/>
        <end position="54"/>
    </location>
</feature>
<feature type="region of interest" description="Disordered" evidence="3">
    <location>
        <begin position="85"/>
        <end position="108"/>
    </location>
</feature>
<feature type="region of interest" description="Disordered" evidence="3">
    <location>
        <begin position="316"/>
        <end position="357"/>
    </location>
</feature>
<feature type="region of interest" description="Disordered" evidence="3">
    <location>
        <begin position="401"/>
        <end position="449"/>
    </location>
</feature>
<feature type="compositionally biased region" description="Polar residues" evidence="3">
    <location>
        <begin position="16"/>
        <end position="30"/>
    </location>
</feature>
<feature type="compositionally biased region" description="Low complexity" evidence="3">
    <location>
        <begin position="338"/>
        <end position="357"/>
    </location>
</feature>
<feature type="compositionally biased region" description="Basic residues" evidence="3">
    <location>
        <begin position="410"/>
        <end position="422"/>
    </location>
</feature>
<feature type="splice variant" id="VSP_052096" description="In isoform b." evidence="5">
    <original>DPDIDAASAMMLLNSAHELQAGF</original>
    <variation>V</variation>
    <location>
        <begin position="248"/>
        <end position="270"/>
    </location>
</feature>
<name>FOXN3_XENLA</name>